<sequence length="209" mass="22238">MIGLVGKKVGMTRIFTEDGVSIPVTVIEVEANRVTQVKDLANDGYRAIQVTTGAKKANRVTKPEAGHFAKAGVEAGRGLWEFRLADGEEFTVGQNISVELFADVKKVDVTGTSKGKGFAGTVKRWNFRTQDATHGNSLSHRVPGSIGQNQTPGKVFKGKKMAGQLGNERVTVQSLDVVRVDAERNLLLVKGAVPGATGSDLIVKPAVKA</sequence>
<gene>
    <name evidence="1" type="primary">rplC</name>
    <name type="ordered locus">KPK_0399</name>
</gene>
<keyword id="KW-0488">Methylation</keyword>
<keyword id="KW-0687">Ribonucleoprotein</keyword>
<keyword id="KW-0689">Ribosomal protein</keyword>
<keyword id="KW-0694">RNA-binding</keyword>
<keyword id="KW-0699">rRNA-binding</keyword>
<dbReference type="EMBL" id="CP000964">
    <property type="protein sequence ID" value="ACI06870.1"/>
    <property type="molecule type" value="Genomic_DNA"/>
</dbReference>
<dbReference type="SMR" id="B5XN94"/>
<dbReference type="KEGG" id="kpe:KPK_0399"/>
<dbReference type="HOGENOM" id="CLU_044142_4_1_6"/>
<dbReference type="Proteomes" id="UP000001734">
    <property type="component" value="Chromosome"/>
</dbReference>
<dbReference type="GO" id="GO:0022625">
    <property type="term" value="C:cytosolic large ribosomal subunit"/>
    <property type="evidence" value="ECO:0007669"/>
    <property type="project" value="TreeGrafter"/>
</dbReference>
<dbReference type="GO" id="GO:0019843">
    <property type="term" value="F:rRNA binding"/>
    <property type="evidence" value="ECO:0007669"/>
    <property type="project" value="UniProtKB-UniRule"/>
</dbReference>
<dbReference type="GO" id="GO:0003735">
    <property type="term" value="F:structural constituent of ribosome"/>
    <property type="evidence" value="ECO:0007669"/>
    <property type="project" value="InterPro"/>
</dbReference>
<dbReference type="GO" id="GO:0006412">
    <property type="term" value="P:translation"/>
    <property type="evidence" value="ECO:0007669"/>
    <property type="project" value="UniProtKB-UniRule"/>
</dbReference>
<dbReference type="FunFam" id="2.40.30.10:FF:000004">
    <property type="entry name" value="50S ribosomal protein L3"/>
    <property type="match status" value="1"/>
</dbReference>
<dbReference type="FunFam" id="3.30.160.810:FF:000001">
    <property type="entry name" value="50S ribosomal protein L3"/>
    <property type="match status" value="1"/>
</dbReference>
<dbReference type="Gene3D" id="3.30.160.810">
    <property type="match status" value="1"/>
</dbReference>
<dbReference type="Gene3D" id="2.40.30.10">
    <property type="entry name" value="Translation factors"/>
    <property type="match status" value="1"/>
</dbReference>
<dbReference type="HAMAP" id="MF_01325_B">
    <property type="entry name" value="Ribosomal_uL3_B"/>
    <property type="match status" value="1"/>
</dbReference>
<dbReference type="InterPro" id="IPR000597">
    <property type="entry name" value="Ribosomal_uL3"/>
</dbReference>
<dbReference type="InterPro" id="IPR019927">
    <property type="entry name" value="Ribosomal_uL3_bac/org-type"/>
</dbReference>
<dbReference type="InterPro" id="IPR019926">
    <property type="entry name" value="Ribosomal_uL3_CS"/>
</dbReference>
<dbReference type="InterPro" id="IPR009000">
    <property type="entry name" value="Transl_B-barrel_sf"/>
</dbReference>
<dbReference type="NCBIfam" id="TIGR03625">
    <property type="entry name" value="L3_bact"/>
    <property type="match status" value="1"/>
</dbReference>
<dbReference type="PANTHER" id="PTHR11229">
    <property type="entry name" value="50S RIBOSOMAL PROTEIN L3"/>
    <property type="match status" value="1"/>
</dbReference>
<dbReference type="PANTHER" id="PTHR11229:SF16">
    <property type="entry name" value="LARGE RIBOSOMAL SUBUNIT PROTEIN UL3C"/>
    <property type="match status" value="1"/>
</dbReference>
<dbReference type="Pfam" id="PF00297">
    <property type="entry name" value="Ribosomal_L3"/>
    <property type="match status" value="1"/>
</dbReference>
<dbReference type="SUPFAM" id="SSF50447">
    <property type="entry name" value="Translation proteins"/>
    <property type="match status" value="1"/>
</dbReference>
<dbReference type="PROSITE" id="PS00474">
    <property type="entry name" value="RIBOSOMAL_L3"/>
    <property type="match status" value="1"/>
</dbReference>
<accession>B5XN94</accession>
<proteinExistence type="inferred from homology"/>
<comment type="function">
    <text evidence="1">One of the primary rRNA binding proteins, it binds directly near the 3'-end of the 23S rRNA, where it nucleates assembly of the 50S subunit.</text>
</comment>
<comment type="subunit">
    <text evidence="1">Part of the 50S ribosomal subunit. Forms a cluster with proteins L14 and L19.</text>
</comment>
<comment type="PTM">
    <text evidence="1">Methylated by PrmB.</text>
</comment>
<comment type="similarity">
    <text evidence="1">Belongs to the universal ribosomal protein uL3 family.</text>
</comment>
<feature type="chain" id="PRO_1000141878" description="Large ribosomal subunit protein uL3">
    <location>
        <begin position="1"/>
        <end position="209"/>
    </location>
</feature>
<feature type="modified residue" description="N5-methylglutamine" evidence="1">
    <location>
        <position position="150"/>
    </location>
</feature>
<evidence type="ECO:0000255" key="1">
    <source>
        <dbReference type="HAMAP-Rule" id="MF_01325"/>
    </source>
</evidence>
<evidence type="ECO:0000305" key="2"/>
<reference key="1">
    <citation type="journal article" date="2008" name="PLoS Genet.">
        <title>Complete genome sequence of the N2-fixing broad host range endophyte Klebsiella pneumoniae 342 and virulence predictions verified in mice.</title>
        <authorList>
            <person name="Fouts D.E."/>
            <person name="Tyler H.L."/>
            <person name="DeBoy R.T."/>
            <person name="Daugherty S."/>
            <person name="Ren Q."/>
            <person name="Badger J.H."/>
            <person name="Durkin A.S."/>
            <person name="Huot H."/>
            <person name="Shrivastava S."/>
            <person name="Kothari S."/>
            <person name="Dodson R.J."/>
            <person name="Mohamoud Y."/>
            <person name="Khouri H."/>
            <person name="Roesch L.F.W."/>
            <person name="Krogfelt K.A."/>
            <person name="Struve C."/>
            <person name="Triplett E.W."/>
            <person name="Methe B.A."/>
        </authorList>
    </citation>
    <scope>NUCLEOTIDE SEQUENCE [LARGE SCALE GENOMIC DNA]</scope>
    <source>
        <strain>342</strain>
    </source>
</reference>
<organism>
    <name type="scientific">Klebsiella pneumoniae (strain 342)</name>
    <dbReference type="NCBI Taxonomy" id="507522"/>
    <lineage>
        <taxon>Bacteria</taxon>
        <taxon>Pseudomonadati</taxon>
        <taxon>Pseudomonadota</taxon>
        <taxon>Gammaproteobacteria</taxon>
        <taxon>Enterobacterales</taxon>
        <taxon>Enterobacteriaceae</taxon>
        <taxon>Klebsiella/Raoultella group</taxon>
        <taxon>Klebsiella</taxon>
        <taxon>Klebsiella pneumoniae complex</taxon>
    </lineage>
</organism>
<protein>
    <recommendedName>
        <fullName evidence="1">Large ribosomal subunit protein uL3</fullName>
    </recommendedName>
    <alternativeName>
        <fullName evidence="2">50S ribosomal protein L3</fullName>
    </alternativeName>
</protein>
<name>RL3_KLEP3</name>